<evidence type="ECO:0000255" key="1">
    <source>
        <dbReference type="HAMAP-Rule" id="MF_00590"/>
    </source>
</evidence>
<reference key="1">
    <citation type="journal article" date="2009" name="Proc. Natl. Acad. Sci. U.S.A.">
        <title>Biogeography of the Sulfolobus islandicus pan-genome.</title>
        <authorList>
            <person name="Reno M.L."/>
            <person name="Held N.L."/>
            <person name="Fields C.J."/>
            <person name="Burke P.V."/>
            <person name="Whitaker R.J."/>
        </authorList>
    </citation>
    <scope>NUCLEOTIDE SEQUENCE [LARGE SCALE GENOMIC DNA]</scope>
    <source>
        <strain>M.16.4 / Kamchatka #3</strain>
    </source>
</reference>
<protein>
    <recommendedName>
        <fullName evidence="1">GTP-dependent dephospho-CoA kinase</fullName>
        <ecNumber evidence="1">2.7.1.237</ecNumber>
    </recommendedName>
    <alternativeName>
        <fullName evidence="1">Dephospho-coenzyme A kinase</fullName>
        <shortName evidence="1">DPCK</shortName>
    </alternativeName>
</protein>
<sequence>MEIRDNNKVNLCFAFDNLRKELSRPYGILFTNNKVFLDFVSKSIQQGFKVITVGDYVSRVLEENGIIPFLEVIDGKTKRSIPQHRAIVKNKEYRVTNEAGKIQFEIFEIIENILKDRDGGVVFVNGEEDLLVIPVILSANNGDIVIYGQPNAGAVVIIVNEMIKWRVRDILEKAVVEEC</sequence>
<name>DPCKG_SACI6</name>
<accession>C4KIC5</accession>
<organism>
    <name type="scientific">Saccharolobus islandicus (strain M.16.4 / Kamchatka #3)</name>
    <name type="common">Sulfolobus islandicus</name>
    <dbReference type="NCBI Taxonomy" id="426118"/>
    <lineage>
        <taxon>Archaea</taxon>
        <taxon>Thermoproteota</taxon>
        <taxon>Thermoprotei</taxon>
        <taxon>Sulfolobales</taxon>
        <taxon>Sulfolobaceae</taxon>
        <taxon>Saccharolobus</taxon>
    </lineage>
</organism>
<keyword id="KW-0173">Coenzyme A biosynthesis</keyword>
<keyword id="KW-0342">GTP-binding</keyword>
<keyword id="KW-0418">Kinase</keyword>
<keyword id="KW-0547">Nucleotide-binding</keyword>
<keyword id="KW-0808">Transferase</keyword>
<gene>
    <name type="ordered locus">M164_1735</name>
</gene>
<comment type="function">
    <text evidence="1">Catalyzes the GTP-dependent phosphorylation of the 3'-hydroxyl group of dephosphocoenzyme A to form coenzyme A (CoA).</text>
</comment>
<comment type="catalytic activity">
    <reaction evidence="1">
        <text>3'-dephospho-CoA + GTP = GDP + CoA + H(+)</text>
        <dbReference type="Rhea" id="RHEA:61156"/>
        <dbReference type="ChEBI" id="CHEBI:15378"/>
        <dbReference type="ChEBI" id="CHEBI:37565"/>
        <dbReference type="ChEBI" id="CHEBI:57287"/>
        <dbReference type="ChEBI" id="CHEBI:57328"/>
        <dbReference type="ChEBI" id="CHEBI:58189"/>
        <dbReference type="EC" id="2.7.1.237"/>
    </reaction>
</comment>
<comment type="pathway">
    <text evidence="1">Cofactor biosynthesis; coenzyme A biosynthesis.</text>
</comment>
<comment type="similarity">
    <text evidence="1">Belongs to the GTP-dependent DPCK family.</text>
</comment>
<feature type="chain" id="PRO_1000212165" description="GTP-dependent dephospho-CoA kinase">
    <location>
        <begin position="1"/>
        <end position="179"/>
    </location>
</feature>
<feature type="binding site" evidence="1">
    <location>
        <position position="55"/>
    </location>
    <ligand>
        <name>GTP</name>
        <dbReference type="ChEBI" id="CHEBI:37565"/>
    </ligand>
</feature>
<feature type="binding site" evidence="1">
    <location>
        <position position="57"/>
    </location>
    <ligand>
        <name>GTP</name>
        <dbReference type="ChEBI" id="CHEBI:37565"/>
    </ligand>
</feature>
<feature type="binding site" evidence="1">
    <location>
        <position position="74"/>
    </location>
    <ligand>
        <name>GTP</name>
        <dbReference type="ChEBI" id="CHEBI:37565"/>
    </ligand>
</feature>
<feature type="binding site" evidence="1">
    <location>
        <position position="76"/>
    </location>
    <ligand>
        <name>GTP</name>
        <dbReference type="ChEBI" id="CHEBI:37565"/>
    </ligand>
</feature>
<feature type="binding site" evidence="1">
    <location>
        <position position="128"/>
    </location>
    <ligand>
        <name>GTP</name>
        <dbReference type="ChEBI" id="CHEBI:37565"/>
    </ligand>
</feature>
<dbReference type="EC" id="2.7.1.237" evidence="1"/>
<dbReference type="EMBL" id="CP001402">
    <property type="protein sequence ID" value="ACR42339.1"/>
    <property type="molecule type" value="Genomic_DNA"/>
</dbReference>
<dbReference type="RefSeq" id="WP_012736046.1">
    <property type="nucleotide sequence ID" value="NC_012726.1"/>
</dbReference>
<dbReference type="SMR" id="C4KIC5"/>
<dbReference type="GeneID" id="84062043"/>
<dbReference type="KEGG" id="sid:M164_1735"/>
<dbReference type="HOGENOM" id="CLU_120795_1_0_2"/>
<dbReference type="UniPathway" id="UPA00241"/>
<dbReference type="Proteomes" id="UP000001479">
    <property type="component" value="Chromosome"/>
</dbReference>
<dbReference type="GO" id="GO:0005525">
    <property type="term" value="F:GTP binding"/>
    <property type="evidence" value="ECO:0007669"/>
    <property type="project" value="UniProtKB-UniRule"/>
</dbReference>
<dbReference type="GO" id="GO:0016301">
    <property type="term" value="F:kinase activity"/>
    <property type="evidence" value="ECO:0007669"/>
    <property type="project" value="UniProtKB-UniRule"/>
</dbReference>
<dbReference type="GO" id="GO:0015937">
    <property type="term" value="P:coenzyme A biosynthetic process"/>
    <property type="evidence" value="ECO:0007669"/>
    <property type="project" value="UniProtKB-UniRule"/>
</dbReference>
<dbReference type="HAMAP" id="MF_00590">
    <property type="entry name" value="Dephospho_CoA_kinase_GTP_dep"/>
    <property type="match status" value="1"/>
</dbReference>
<dbReference type="InterPro" id="IPR007164">
    <property type="entry name" value="GTP-dep_dephospho-CoA_kin"/>
</dbReference>
<dbReference type="PANTHER" id="PTHR40732:SF1">
    <property type="entry name" value="GTP-DEPENDENT DEPHOSPHO-COA KINASE"/>
    <property type="match status" value="1"/>
</dbReference>
<dbReference type="PANTHER" id="PTHR40732">
    <property type="entry name" value="UPF0218 PROTEIN TK1697"/>
    <property type="match status" value="1"/>
</dbReference>
<dbReference type="Pfam" id="PF04019">
    <property type="entry name" value="DUF359"/>
    <property type="match status" value="1"/>
</dbReference>
<dbReference type="PIRSF" id="PIRSF006533">
    <property type="entry name" value="UCP006533"/>
    <property type="match status" value="1"/>
</dbReference>
<proteinExistence type="inferred from homology"/>